<comment type="function">
    <text evidence="1">Catalyzes the reversible conversion of 2-phosphoglycerate (2-PG) into phosphoenolpyruvate (PEP). It is essential for the degradation of carbohydrates via glycolysis.</text>
</comment>
<comment type="catalytic activity">
    <reaction evidence="1">
        <text>(2R)-2-phosphoglycerate = phosphoenolpyruvate + H2O</text>
        <dbReference type="Rhea" id="RHEA:10164"/>
        <dbReference type="ChEBI" id="CHEBI:15377"/>
        <dbReference type="ChEBI" id="CHEBI:58289"/>
        <dbReference type="ChEBI" id="CHEBI:58702"/>
        <dbReference type="EC" id="4.2.1.11"/>
    </reaction>
</comment>
<comment type="cofactor">
    <cofactor evidence="1">
        <name>Mg(2+)</name>
        <dbReference type="ChEBI" id="CHEBI:18420"/>
    </cofactor>
    <text evidence="1">Binds a second Mg(2+) ion via substrate during catalysis.</text>
</comment>
<comment type="pathway">
    <text evidence="1">Carbohydrate degradation; glycolysis; pyruvate from D-glyceraldehyde 3-phosphate: step 4/5.</text>
</comment>
<comment type="subcellular location">
    <subcellularLocation>
        <location evidence="1">Cytoplasm</location>
    </subcellularLocation>
    <subcellularLocation>
        <location evidence="1">Secreted</location>
    </subcellularLocation>
    <subcellularLocation>
        <location evidence="1">Cell surface</location>
    </subcellularLocation>
    <text evidence="1">Fractions of enolase are present in both the cytoplasm and on the cell surface.</text>
</comment>
<comment type="similarity">
    <text evidence="1">Belongs to the enolase family.</text>
</comment>
<gene>
    <name evidence="1" type="primary">eno</name>
    <name type="ordered locus">Vapar_3446</name>
</gene>
<proteinExistence type="inferred from homology"/>
<name>ENO_VARPS</name>
<reference key="1">
    <citation type="journal article" date="2011" name="J. Bacteriol.">
        <title>Complete genome sequence of the metabolically versatile plant growth-promoting endophyte, Variovorax paradoxus S110.</title>
        <authorList>
            <person name="Han J.I."/>
            <person name="Choi H.K."/>
            <person name="Lee S.W."/>
            <person name="Orwin P.M."/>
            <person name="Kim J."/>
            <person name="Laroe S.L."/>
            <person name="Kim T.G."/>
            <person name="O'Neil J."/>
            <person name="Leadbetter J.R."/>
            <person name="Lee S.Y."/>
            <person name="Hur C.G."/>
            <person name="Spain J.C."/>
            <person name="Ovchinnikova G."/>
            <person name="Goodwin L."/>
            <person name="Han C."/>
        </authorList>
    </citation>
    <scope>NUCLEOTIDE SEQUENCE [LARGE SCALE GENOMIC DNA]</scope>
    <source>
        <strain>S110</strain>
    </source>
</reference>
<accession>C5CSV6</accession>
<feature type="chain" id="PRO_1000205112" description="Enolase">
    <location>
        <begin position="1"/>
        <end position="427"/>
    </location>
</feature>
<feature type="active site" description="Proton donor" evidence="1">
    <location>
        <position position="205"/>
    </location>
</feature>
<feature type="active site" description="Proton acceptor" evidence="1">
    <location>
        <position position="337"/>
    </location>
</feature>
<feature type="binding site" evidence="1">
    <location>
        <position position="163"/>
    </location>
    <ligand>
        <name>(2R)-2-phosphoglycerate</name>
        <dbReference type="ChEBI" id="CHEBI:58289"/>
    </ligand>
</feature>
<feature type="binding site" evidence="1">
    <location>
        <position position="242"/>
    </location>
    <ligand>
        <name>Mg(2+)</name>
        <dbReference type="ChEBI" id="CHEBI:18420"/>
    </ligand>
</feature>
<feature type="binding site" evidence="1">
    <location>
        <position position="285"/>
    </location>
    <ligand>
        <name>Mg(2+)</name>
        <dbReference type="ChEBI" id="CHEBI:18420"/>
    </ligand>
</feature>
<feature type="binding site" evidence="1">
    <location>
        <position position="312"/>
    </location>
    <ligand>
        <name>Mg(2+)</name>
        <dbReference type="ChEBI" id="CHEBI:18420"/>
    </ligand>
</feature>
<feature type="binding site" evidence="1">
    <location>
        <position position="337"/>
    </location>
    <ligand>
        <name>(2R)-2-phosphoglycerate</name>
        <dbReference type="ChEBI" id="CHEBI:58289"/>
    </ligand>
</feature>
<feature type="binding site" evidence="1">
    <location>
        <position position="366"/>
    </location>
    <ligand>
        <name>(2R)-2-phosphoglycerate</name>
        <dbReference type="ChEBI" id="CHEBI:58289"/>
    </ligand>
</feature>
<feature type="binding site" evidence="1">
    <location>
        <position position="367"/>
    </location>
    <ligand>
        <name>(2R)-2-phosphoglycerate</name>
        <dbReference type="ChEBI" id="CHEBI:58289"/>
    </ligand>
</feature>
<feature type="binding site" evidence="1">
    <location>
        <position position="388"/>
    </location>
    <ligand>
        <name>(2R)-2-phosphoglycerate</name>
        <dbReference type="ChEBI" id="CHEBI:58289"/>
    </ligand>
</feature>
<organism>
    <name type="scientific">Variovorax paradoxus (strain S110)</name>
    <dbReference type="NCBI Taxonomy" id="543728"/>
    <lineage>
        <taxon>Bacteria</taxon>
        <taxon>Pseudomonadati</taxon>
        <taxon>Pseudomonadota</taxon>
        <taxon>Betaproteobacteria</taxon>
        <taxon>Burkholderiales</taxon>
        <taxon>Comamonadaceae</taxon>
        <taxon>Variovorax</taxon>
    </lineage>
</organism>
<protein>
    <recommendedName>
        <fullName evidence="1">Enolase</fullName>
        <ecNumber evidence="1">4.2.1.11</ecNumber>
    </recommendedName>
    <alternativeName>
        <fullName evidence="1">2-phospho-D-glycerate hydro-lyase</fullName>
    </alternativeName>
    <alternativeName>
        <fullName evidence="1">2-phosphoglycerate dehydratase</fullName>
    </alternativeName>
</protein>
<evidence type="ECO:0000255" key="1">
    <source>
        <dbReference type="HAMAP-Rule" id="MF_00318"/>
    </source>
</evidence>
<sequence length="427" mass="45555">MSAIVDIVGREILDSRGNPTVECDVLLESGTMGRAAVPSGASTGSREAIELRDGDKKRYLGKGVLKAVENINTEISESVLGLDASEQAFLDRTMIDLDGTDNKGRLGANATLAVSMAVARAAAEESGLPLYRYFGGMGGMQLPVPMMNVINGGAHANNSLDLQEFMIIPVGAPSFREAVRYGAEVFHALKKILGDRGISTAVGDEGGFAPSVESHEAAIQLILEAIDKAGFVAGEQIALGLDCAASEFYKDGNYVLSGENLTLSAGNWADMLATWVDKYPIISIEDGMHEGDWDGWKLLTERLGKRVQLVGDDLFVTNTKILQEGIDKGIANSILIKINQIGTLTETFAAIEMAKRAGYTAVISHRSGETEDSTIADIAVGTNAGQIKTGSLSRSDRIAKYNQLLRIEEDLGDIASYPGRGAFYNLK</sequence>
<keyword id="KW-0963">Cytoplasm</keyword>
<keyword id="KW-0324">Glycolysis</keyword>
<keyword id="KW-0456">Lyase</keyword>
<keyword id="KW-0460">Magnesium</keyword>
<keyword id="KW-0479">Metal-binding</keyword>
<keyword id="KW-0964">Secreted</keyword>
<dbReference type="EC" id="4.2.1.11" evidence="1"/>
<dbReference type="EMBL" id="CP001635">
    <property type="protein sequence ID" value="ACS20063.1"/>
    <property type="molecule type" value="Genomic_DNA"/>
</dbReference>
<dbReference type="SMR" id="C5CSV6"/>
<dbReference type="STRING" id="543728.Vapar_3446"/>
<dbReference type="KEGG" id="vap:Vapar_3446"/>
<dbReference type="eggNOG" id="COG0148">
    <property type="taxonomic scope" value="Bacteria"/>
</dbReference>
<dbReference type="HOGENOM" id="CLU_031223_2_1_4"/>
<dbReference type="OrthoDB" id="9804716at2"/>
<dbReference type="UniPathway" id="UPA00109">
    <property type="reaction ID" value="UER00187"/>
</dbReference>
<dbReference type="GO" id="GO:0009986">
    <property type="term" value="C:cell surface"/>
    <property type="evidence" value="ECO:0007669"/>
    <property type="project" value="UniProtKB-SubCell"/>
</dbReference>
<dbReference type="GO" id="GO:0005576">
    <property type="term" value="C:extracellular region"/>
    <property type="evidence" value="ECO:0007669"/>
    <property type="project" value="UniProtKB-SubCell"/>
</dbReference>
<dbReference type="GO" id="GO:0000015">
    <property type="term" value="C:phosphopyruvate hydratase complex"/>
    <property type="evidence" value="ECO:0007669"/>
    <property type="project" value="InterPro"/>
</dbReference>
<dbReference type="GO" id="GO:0000287">
    <property type="term" value="F:magnesium ion binding"/>
    <property type="evidence" value="ECO:0007669"/>
    <property type="project" value="UniProtKB-UniRule"/>
</dbReference>
<dbReference type="GO" id="GO:0004634">
    <property type="term" value="F:phosphopyruvate hydratase activity"/>
    <property type="evidence" value="ECO:0007669"/>
    <property type="project" value="UniProtKB-UniRule"/>
</dbReference>
<dbReference type="GO" id="GO:0006096">
    <property type="term" value="P:glycolytic process"/>
    <property type="evidence" value="ECO:0007669"/>
    <property type="project" value="UniProtKB-UniRule"/>
</dbReference>
<dbReference type="CDD" id="cd03313">
    <property type="entry name" value="enolase"/>
    <property type="match status" value="1"/>
</dbReference>
<dbReference type="FunFam" id="3.20.20.120:FF:000001">
    <property type="entry name" value="Enolase"/>
    <property type="match status" value="1"/>
</dbReference>
<dbReference type="FunFam" id="3.30.390.10:FF:000001">
    <property type="entry name" value="Enolase"/>
    <property type="match status" value="1"/>
</dbReference>
<dbReference type="Gene3D" id="3.20.20.120">
    <property type="entry name" value="Enolase-like C-terminal domain"/>
    <property type="match status" value="1"/>
</dbReference>
<dbReference type="Gene3D" id="3.30.390.10">
    <property type="entry name" value="Enolase-like, N-terminal domain"/>
    <property type="match status" value="1"/>
</dbReference>
<dbReference type="HAMAP" id="MF_00318">
    <property type="entry name" value="Enolase"/>
    <property type="match status" value="1"/>
</dbReference>
<dbReference type="InterPro" id="IPR000941">
    <property type="entry name" value="Enolase"/>
</dbReference>
<dbReference type="InterPro" id="IPR036849">
    <property type="entry name" value="Enolase-like_C_sf"/>
</dbReference>
<dbReference type="InterPro" id="IPR029017">
    <property type="entry name" value="Enolase-like_N"/>
</dbReference>
<dbReference type="InterPro" id="IPR020810">
    <property type="entry name" value="Enolase_C"/>
</dbReference>
<dbReference type="InterPro" id="IPR020809">
    <property type="entry name" value="Enolase_CS"/>
</dbReference>
<dbReference type="InterPro" id="IPR020811">
    <property type="entry name" value="Enolase_N"/>
</dbReference>
<dbReference type="NCBIfam" id="TIGR01060">
    <property type="entry name" value="eno"/>
    <property type="match status" value="1"/>
</dbReference>
<dbReference type="PANTHER" id="PTHR11902">
    <property type="entry name" value="ENOLASE"/>
    <property type="match status" value="1"/>
</dbReference>
<dbReference type="PANTHER" id="PTHR11902:SF1">
    <property type="entry name" value="ENOLASE"/>
    <property type="match status" value="1"/>
</dbReference>
<dbReference type="Pfam" id="PF00113">
    <property type="entry name" value="Enolase_C"/>
    <property type="match status" value="1"/>
</dbReference>
<dbReference type="Pfam" id="PF03952">
    <property type="entry name" value="Enolase_N"/>
    <property type="match status" value="1"/>
</dbReference>
<dbReference type="PIRSF" id="PIRSF001400">
    <property type="entry name" value="Enolase"/>
    <property type="match status" value="1"/>
</dbReference>
<dbReference type="PRINTS" id="PR00148">
    <property type="entry name" value="ENOLASE"/>
</dbReference>
<dbReference type="SFLD" id="SFLDS00001">
    <property type="entry name" value="Enolase"/>
    <property type="match status" value="1"/>
</dbReference>
<dbReference type="SFLD" id="SFLDF00002">
    <property type="entry name" value="enolase"/>
    <property type="match status" value="1"/>
</dbReference>
<dbReference type="SMART" id="SM01192">
    <property type="entry name" value="Enolase_C"/>
    <property type="match status" value="1"/>
</dbReference>
<dbReference type="SMART" id="SM01193">
    <property type="entry name" value="Enolase_N"/>
    <property type="match status" value="1"/>
</dbReference>
<dbReference type="SUPFAM" id="SSF51604">
    <property type="entry name" value="Enolase C-terminal domain-like"/>
    <property type="match status" value="1"/>
</dbReference>
<dbReference type="SUPFAM" id="SSF54826">
    <property type="entry name" value="Enolase N-terminal domain-like"/>
    <property type="match status" value="1"/>
</dbReference>
<dbReference type="PROSITE" id="PS00164">
    <property type="entry name" value="ENOLASE"/>
    <property type="match status" value="1"/>
</dbReference>